<organism>
    <name type="scientific">Streptococcus pyogenes serotype M49 (strain NZ131)</name>
    <dbReference type="NCBI Taxonomy" id="471876"/>
    <lineage>
        <taxon>Bacteria</taxon>
        <taxon>Bacillati</taxon>
        <taxon>Bacillota</taxon>
        <taxon>Bacilli</taxon>
        <taxon>Lactobacillales</taxon>
        <taxon>Streptococcaceae</taxon>
        <taxon>Streptococcus</taxon>
    </lineage>
</organism>
<evidence type="ECO:0000255" key="1">
    <source>
        <dbReference type="HAMAP-Rule" id="MF_00051"/>
    </source>
</evidence>
<gene>
    <name evidence="1" type="primary">glyA</name>
    <name type="ordered locus">Spy49_0898</name>
</gene>
<feature type="chain" id="PRO_1000091588" description="Serine hydroxymethyltransferase">
    <location>
        <begin position="1"/>
        <end position="418"/>
    </location>
</feature>
<feature type="binding site" evidence="1">
    <location>
        <position position="121"/>
    </location>
    <ligand>
        <name>(6S)-5,6,7,8-tetrahydrofolate</name>
        <dbReference type="ChEBI" id="CHEBI:57453"/>
    </ligand>
</feature>
<feature type="binding site" evidence="1">
    <location>
        <begin position="125"/>
        <end position="127"/>
    </location>
    <ligand>
        <name>(6S)-5,6,7,8-tetrahydrofolate</name>
        <dbReference type="ChEBI" id="CHEBI:57453"/>
    </ligand>
</feature>
<feature type="binding site" evidence="1">
    <location>
        <begin position="355"/>
        <end position="357"/>
    </location>
    <ligand>
        <name>(6S)-5,6,7,8-tetrahydrofolate</name>
        <dbReference type="ChEBI" id="CHEBI:57453"/>
    </ligand>
</feature>
<feature type="site" description="Plays an important role in substrate specificity" evidence="1">
    <location>
        <position position="229"/>
    </location>
</feature>
<feature type="modified residue" description="N6-(pyridoxal phosphate)lysine" evidence="1">
    <location>
        <position position="230"/>
    </location>
</feature>
<accession>B5XLJ2</accession>
<keyword id="KW-0028">Amino-acid biosynthesis</keyword>
<keyword id="KW-0963">Cytoplasm</keyword>
<keyword id="KW-0554">One-carbon metabolism</keyword>
<keyword id="KW-0663">Pyridoxal phosphate</keyword>
<keyword id="KW-0808">Transferase</keyword>
<comment type="function">
    <text evidence="1">Catalyzes the reversible interconversion of serine and glycine with tetrahydrofolate (THF) serving as the one-carbon carrier. This reaction serves as the major source of one-carbon groups required for the biosynthesis of purines, thymidylate, methionine, and other important biomolecules. Also exhibits THF-independent aldolase activity toward beta-hydroxyamino acids, producing glycine and aldehydes, via a retro-aldol mechanism.</text>
</comment>
<comment type="catalytic activity">
    <reaction evidence="1">
        <text>(6R)-5,10-methylene-5,6,7,8-tetrahydrofolate + glycine + H2O = (6S)-5,6,7,8-tetrahydrofolate + L-serine</text>
        <dbReference type="Rhea" id="RHEA:15481"/>
        <dbReference type="ChEBI" id="CHEBI:15377"/>
        <dbReference type="ChEBI" id="CHEBI:15636"/>
        <dbReference type="ChEBI" id="CHEBI:33384"/>
        <dbReference type="ChEBI" id="CHEBI:57305"/>
        <dbReference type="ChEBI" id="CHEBI:57453"/>
        <dbReference type="EC" id="2.1.2.1"/>
    </reaction>
</comment>
<comment type="cofactor">
    <cofactor evidence="1">
        <name>pyridoxal 5'-phosphate</name>
        <dbReference type="ChEBI" id="CHEBI:597326"/>
    </cofactor>
</comment>
<comment type="pathway">
    <text evidence="1">One-carbon metabolism; tetrahydrofolate interconversion.</text>
</comment>
<comment type="pathway">
    <text evidence="1">Amino-acid biosynthesis; glycine biosynthesis; glycine from L-serine: step 1/1.</text>
</comment>
<comment type="subunit">
    <text evidence="1">Homodimer.</text>
</comment>
<comment type="subcellular location">
    <subcellularLocation>
        <location evidence="1">Cytoplasm</location>
    </subcellularLocation>
</comment>
<comment type="similarity">
    <text evidence="1">Belongs to the SHMT family.</text>
</comment>
<proteinExistence type="inferred from homology"/>
<reference key="1">
    <citation type="journal article" date="2008" name="J. Bacteriol.">
        <title>Genome sequence of a nephritogenic and highly transformable M49 strain of Streptococcus pyogenes.</title>
        <authorList>
            <person name="McShan W.M."/>
            <person name="Ferretti J.J."/>
            <person name="Karasawa T."/>
            <person name="Suvorov A.N."/>
            <person name="Lin S."/>
            <person name="Qin B."/>
            <person name="Jia H."/>
            <person name="Kenton S."/>
            <person name="Najar F."/>
            <person name="Wu H."/>
            <person name="Scott J."/>
            <person name="Roe B.A."/>
            <person name="Savic D.J."/>
        </authorList>
    </citation>
    <scope>NUCLEOTIDE SEQUENCE [LARGE SCALE GENOMIC DNA]</scope>
    <source>
        <strain>NZ131</strain>
    </source>
</reference>
<sequence length="418" mass="45096">MIFDKGNVEDFDKELWDAIHAEEERQEHHIELIASENMVSKAVMAAQGSVLTNKYAEGYPGNRYYGGTECVDIVETLAIERAKKLFGAAFANVQAHSGSQANAAAYMALIEAGDTVLGMDLAAGGHLTHGSPVNFSGKTYHFVSYSVDADTEMLNYEAILEQAKAVQPKLIVAGASAYSRSIDFEKFRAIADHVGAYLMVDMAHIAGLVAAGVHPSPVPYAHIVTSTTHKTLRGPRGGLILTNDEALAKKINSAVFPGLQGGPLEHVIAAKAVAFKEALDPAFKDYAQAIIDNTAAMAAVFAQDDRFRLISGGTDNHVFLVDVTKVIANGKLAQNLLDEVNITLNKNAIPFETLSPFKTSGIRIGCAAITSRGMGVKESQTIARLIIKALVNHDQETILEEVRQEVRQLTDAFPLYKK</sequence>
<name>GLYA_STRPZ</name>
<dbReference type="EC" id="2.1.2.1" evidence="1"/>
<dbReference type="EMBL" id="CP000829">
    <property type="protein sequence ID" value="ACI61204.1"/>
    <property type="molecule type" value="Genomic_DNA"/>
</dbReference>
<dbReference type="SMR" id="B5XLJ2"/>
<dbReference type="KEGG" id="soz:Spy49_0898"/>
<dbReference type="HOGENOM" id="CLU_022477_2_1_9"/>
<dbReference type="UniPathway" id="UPA00193"/>
<dbReference type="UniPathway" id="UPA00288">
    <property type="reaction ID" value="UER01023"/>
</dbReference>
<dbReference type="Proteomes" id="UP000001039">
    <property type="component" value="Chromosome"/>
</dbReference>
<dbReference type="GO" id="GO:0005829">
    <property type="term" value="C:cytosol"/>
    <property type="evidence" value="ECO:0007669"/>
    <property type="project" value="TreeGrafter"/>
</dbReference>
<dbReference type="GO" id="GO:0004372">
    <property type="term" value="F:glycine hydroxymethyltransferase activity"/>
    <property type="evidence" value="ECO:0007669"/>
    <property type="project" value="UniProtKB-UniRule"/>
</dbReference>
<dbReference type="GO" id="GO:0030170">
    <property type="term" value="F:pyridoxal phosphate binding"/>
    <property type="evidence" value="ECO:0007669"/>
    <property type="project" value="UniProtKB-UniRule"/>
</dbReference>
<dbReference type="GO" id="GO:0019264">
    <property type="term" value="P:glycine biosynthetic process from serine"/>
    <property type="evidence" value="ECO:0007669"/>
    <property type="project" value="UniProtKB-UniRule"/>
</dbReference>
<dbReference type="GO" id="GO:0035999">
    <property type="term" value="P:tetrahydrofolate interconversion"/>
    <property type="evidence" value="ECO:0007669"/>
    <property type="project" value="UniProtKB-UniRule"/>
</dbReference>
<dbReference type="CDD" id="cd00378">
    <property type="entry name" value="SHMT"/>
    <property type="match status" value="1"/>
</dbReference>
<dbReference type="FunFam" id="3.40.640.10:FF:000001">
    <property type="entry name" value="Serine hydroxymethyltransferase"/>
    <property type="match status" value="1"/>
</dbReference>
<dbReference type="Gene3D" id="3.90.1150.10">
    <property type="entry name" value="Aspartate Aminotransferase, domain 1"/>
    <property type="match status" value="1"/>
</dbReference>
<dbReference type="Gene3D" id="3.40.640.10">
    <property type="entry name" value="Type I PLP-dependent aspartate aminotransferase-like (Major domain)"/>
    <property type="match status" value="1"/>
</dbReference>
<dbReference type="HAMAP" id="MF_00051">
    <property type="entry name" value="SHMT"/>
    <property type="match status" value="1"/>
</dbReference>
<dbReference type="InterPro" id="IPR015424">
    <property type="entry name" value="PyrdxlP-dep_Trfase"/>
</dbReference>
<dbReference type="InterPro" id="IPR015421">
    <property type="entry name" value="PyrdxlP-dep_Trfase_major"/>
</dbReference>
<dbReference type="InterPro" id="IPR015422">
    <property type="entry name" value="PyrdxlP-dep_Trfase_small"/>
</dbReference>
<dbReference type="InterPro" id="IPR001085">
    <property type="entry name" value="Ser_HO-MeTrfase"/>
</dbReference>
<dbReference type="InterPro" id="IPR049943">
    <property type="entry name" value="Ser_HO-MeTrfase-like"/>
</dbReference>
<dbReference type="InterPro" id="IPR019798">
    <property type="entry name" value="Ser_HO-MeTrfase_PLP_BS"/>
</dbReference>
<dbReference type="InterPro" id="IPR039429">
    <property type="entry name" value="SHMT-like_dom"/>
</dbReference>
<dbReference type="NCBIfam" id="NF000586">
    <property type="entry name" value="PRK00011.1"/>
    <property type="match status" value="1"/>
</dbReference>
<dbReference type="PANTHER" id="PTHR11680">
    <property type="entry name" value="SERINE HYDROXYMETHYLTRANSFERASE"/>
    <property type="match status" value="1"/>
</dbReference>
<dbReference type="PANTHER" id="PTHR11680:SF35">
    <property type="entry name" value="SERINE HYDROXYMETHYLTRANSFERASE 1"/>
    <property type="match status" value="1"/>
</dbReference>
<dbReference type="Pfam" id="PF00464">
    <property type="entry name" value="SHMT"/>
    <property type="match status" value="1"/>
</dbReference>
<dbReference type="PIRSF" id="PIRSF000412">
    <property type="entry name" value="SHMT"/>
    <property type="match status" value="1"/>
</dbReference>
<dbReference type="SUPFAM" id="SSF53383">
    <property type="entry name" value="PLP-dependent transferases"/>
    <property type="match status" value="1"/>
</dbReference>
<dbReference type="PROSITE" id="PS00096">
    <property type="entry name" value="SHMT"/>
    <property type="match status" value="1"/>
</dbReference>
<protein>
    <recommendedName>
        <fullName evidence="1">Serine hydroxymethyltransferase</fullName>
        <shortName evidence="1">SHMT</shortName>
        <shortName evidence="1">Serine methylase</shortName>
        <ecNumber evidence="1">2.1.2.1</ecNumber>
    </recommendedName>
</protein>